<reference key="1">
    <citation type="journal article" date="2005" name="J. Bacteriol.">
        <title>Whole-genome sequence analysis of Pseudomonas syringae pv. phaseolicola 1448A reveals divergence among pathovars in genes involved in virulence and transposition.</title>
        <authorList>
            <person name="Joardar V."/>
            <person name="Lindeberg M."/>
            <person name="Jackson R.W."/>
            <person name="Selengut J."/>
            <person name="Dodson R."/>
            <person name="Brinkac L.M."/>
            <person name="Daugherty S.C."/>
            <person name="DeBoy R.T."/>
            <person name="Durkin A.S."/>
            <person name="Gwinn Giglio M."/>
            <person name="Madupu R."/>
            <person name="Nelson W.C."/>
            <person name="Rosovitz M.J."/>
            <person name="Sullivan S.A."/>
            <person name="Crabtree J."/>
            <person name="Creasy T."/>
            <person name="Davidsen T.M."/>
            <person name="Haft D.H."/>
            <person name="Zafar N."/>
            <person name="Zhou L."/>
            <person name="Halpin R."/>
            <person name="Holley T."/>
            <person name="Khouri H.M."/>
            <person name="Feldblyum T.V."/>
            <person name="White O."/>
            <person name="Fraser C.M."/>
            <person name="Chatterjee A.K."/>
            <person name="Cartinhour S."/>
            <person name="Schneider D."/>
            <person name="Mansfield J.W."/>
            <person name="Collmer A."/>
            <person name="Buell R."/>
        </authorList>
    </citation>
    <scope>NUCLEOTIDE SEQUENCE [LARGE SCALE GENOMIC DNA]</scope>
    <source>
        <strain>1448A / Race 6</strain>
    </source>
</reference>
<protein>
    <recommendedName>
        <fullName evidence="1">Anhydro-N-acetylmuramic acid kinase</fullName>
        <ecNumber evidence="1">2.7.1.170</ecNumber>
    </recommendedName>
    <alternativeName>
        <fullName evidence="1">AnhMurNAc kinase</fullName>
    </alternativeName>
</protein>
<accession>Q48NN5</accession>
<feature type="chain" id="PRO_0000250032" description="Anhydro-N-acetylmuramic acid kinase">
    <location>
        <begin position="1"/>
        <end position="364"/>
    </location>
</feature>
<feature type="binding site" evidence="1">
    <location>
        <begin position="11"/>
        <end position="18"/>
    </location>
    <ligand>
        <name>ATP</name>
        <dbReference type="ChEBI" id="CHEBI:30616"/>
    </ligand>
</feature>
<name>ANMK_PSE14</name>
<dbReference type="EC" id="2.7.1.170" evidence="1"/>
<dbReference type="EMBL" id="CP000058">
    <property type="protein sequence ID" value="AAZ35715.1"/>
    <property type="molecule type" value="Genomic_DNA"/>
</dbReference>
<dbReference type="RefSeq" id="WP_004663838.1">
    <property type="nucleotide sequence ID" value="NC_005773.3"/>
</dbReference>
<dbReference type="SMR" id="Q48NN5"/>
<dbReference type="KEGG" id="psp:PSPPH_0686"/>
<dbReference type="eggNOG" id="COG2377">
    <property type="taxonomic scope" value="Bacteria"/>
</dbReference>
<dbReference type="HOGENOM" id="CLU_038782_0_0_6"/>
<dbReference type="UniPathway" id="UPA00343"/>
<dbReference type="UniPathway" id="UPA00544"/>
<dbReference type="Proteomes" id="UP000000551">
    <property type="component" value="Chromosome"/>
</dbReference>
<dbReference type="GO" id="GO:0005524">
    <property type="term" value="F:ATP binding"/>
    <property type="evidence" value="ECO:0007669"/>
    <property type="project" value="UniProtKB-UniRule"/>
</dbReference>
<dbReference type="GO" id="GO:0016301">
    <property type="term" value="F:kinase activity"/>
    <property type="evidence" value="ECO:0007669"/>
    <property type="project" value="UniProtKB-KW"/>
</dbReference>
<dbReference type="GO" id="GO:0016773">
    <property type="term" value="F:phosphotransferase activity, alcohol group as acceptor"/>
    <property type="evidence" value="ECO:0007669"/>
    <property type="project" value="UniProtKB-UniRule"/>
</dbReference>
<dbReference type="GO" id="GO:0097175">
    <property type="term" value="P:1,6-anhydro-N-acetyl-beta-muramic acid catabolic process"/>
    <property type="evidence" value="ECO:0007669"/>
    <property type="project" value="UniProtKB-UniRule"/>
</dbReference>
<dbReference type="GO" id="GO:0006040">
    <property type="term" value="P:amino sugar metabolic process"/>
    <property type="evidence" value="ECO:0007669"/>
    <property type="project" value="InterPro"/>
</dbReference>
<dbReference type="GO" id="GO:0009254">
    <property type="term" value="P:peptidoglycan turnover"/>
    <property type="evidence" value="ECO:0007669"/>
    <property type="project" value="UniProtKB-UniRule"/>
</dbReference>
<dbReference type="CDD" id="cd24050">
    <property type="entry name" value="ASKHA_NBD_ANMK"/>
    <property type="match status" value="1"/>
</dbReference>
<dbReference type="Gene3D" id="3.30.420.40">
    <property type="match status" value="2"/>
</dbReference>
<dbReference type="HAMAP" id="MF_01270">
    <property type="entry name" value="AnhMurNAc_kinase"/>
    <property type="match status" value="1"/>
</dbReference>
<dbReference type="InterPro" id="IPR005338">
    <property type="entry name" value="Anhydro_N_Ac-Mur_kinase"/>
</dbReference>
<dbReference type="InterPro" id="IPR043129">
    <property type="entry name" value="ATPase_NBD"/>
</dbReference>
<dbReference type="NCBIfam" id="NF007139">
    <property type="entry name" value="PRK09585.1-3"/>
    <property type="match status" value="1"/>
</dbReference>
<dbReference type="PANTHER" id="PTHR30605">
    <property type="entry name" value="ANHYDRO-N-ACETYLMURAMIC ACID KINASE"/>
    <property type="match status" value="1"/>
</dbReference>
<dbReference type="PANTHER" id="PTHR30605:SF0">
    <property type="entry name" value="ANHYDRO-N-ACETYLMURAMIC ACID KINASE"/>
    <property type="match status" value="1"/>
</dbReference>
<dbReference type="Pfam" id="PF03702">
    <property type="entry name" value="AnmK"/>
    <property type="match status" value="1"/>
</dbReference>
<dbReference type="SUPFAM" id="SSF53067">
    <property type="entry name" value="Actin-like ATPase domain"/>
    <property type="match status" value="1"/>
</dbReference>
<comment type="function">
    <text evidence="1">Catalyzes the specific phosphorylation of 1,6-anhydro-N-acetylmuramic acid (anhMurNAc) with the simultaneous cleavage of the 1,6-anhydro ring, generating MurNAc-6-P. Is required for the utilization of anhMurNAc either imported from the medium or derived from its own cell wall murein, and thus plays a role in cell wall recycling.</text>
</comment>
<comment type="catalytic activity">
    <reaction evidence="1">
        <text>1,6-anhydro-N-acetyl-beta-muramate + ATP + H2O = N-acetyl-D-muramate 6-phosphate + ADP + H(+)</text>
        <dbReference type="Rhea" id="RHEA:24952"/>
        <dbReference type="ChEBI" id="CHEBI:15377"/>
        <dbReference type="ChEBI" id="CHEBI:15378"/>
        <dbReference type="ChEBI" id="CHEBI:30616"/>
        <dbReference type="ChEBI" id="CHEBI:58690"/>
        <dbReference type="ChEBI" id="CHEBI:58722"/>
        <dbReference type="ChEBI" id="CHEBI:456216"/>
        <dbReference type="EC" id="2.7.1.170"/>
    </reaction>
</comment>
<comment type="pathway">
    <text evidence="1">Amino-sugar metabolism; 1,6-anhydro-N-acetylmuramate degradation.</text>
</comment>
<comment type="pathway">
    <text evidence="1">Cell wall biogenesis; peptidoglycan recycling.</text>
</comment>
<comment type="similarity">
    <text evidence="1">Belongs to the anhydro-N-acetylmuramic acid kinase family.</text>
</comment>
<sequence length="364" mass="39652">MDFFYIGVMSGSSLDGIDIALLKQDDRSRLLATHYIPMPEDLHAELLGLCSSGVDELARAAIAEQKWCRLVAQGVQTLLEDQNMVPAQIRAIGSHGQTIRHEPARGYSIQIGNPALLAELTEITVVSDFRRRDIAAGGQGAPLVPAFHEALFDDNKDHRAVLNIGGFSNLSLIESDRPVEGFDCGPGNVLLDAWIQSQRHESYDKDGEWAASGEVDQALLQKLLSDQFFLTKGPKSTGREVFNLGWVHHHLFQLPTLTPEDVQATLLELTALTITESLQSAQAITKELLVCGGGAHNKALMKRLAELLPDTEVSSTEKFGVDPDWVEAMAFAWLAHCCLEGVPANRPTVTGAKGRRVLGAIYPA</sequence>
<gene>
    <name evidence="1" type="primary">anmK</name>
    <name type="ordered locus">PSPPH_0686</name>
</gene>
<evidence type="ECO:0000255" key="1">
    <source>
        <dbReference type="HAMAP-Rule" id="MF_01270"/>
    </source>
</evidence>
<keyword id="KW-0067">ATP-binding</keyword>
<keyword id="KW-0119">Carbohydrate metabolism</keyword>
<keyword id="KW-0418">Kinase</keyword>
<keyword id="KW-0547">Nucleotide-binding</keyword>
<keyword id="KW-0808">Transferase</keyword>
<organism>
    <name type="scientific">Pseudomonas savastanoi pv. phaseolicola (strain 1448A / Race 6)</name>
    <name type="common">Pseudomonas syringae pv. phaseolicola (strain 1448A / Race 6)</name>
    <dbReference type="NCBI Taxonomy" id="264730"/>
    <lineage>
        <taxon>Bacteria</taxon>
        <taxon>Pseudomonadati</taxon>
        <taxon>Pseudomonadota</taxon>
        <taxon>Gammaproteobacteria</taxon>
        <taxon>Pseudomonadales</taxon>
        <taxon>Pseudomonadaceae</taxon>
        <taxon>Pseudomonas</taxon>
    </lineage>
</organism>
<proteinExistence type="inferred from homology"/>